<proteinExistence type="predicted"/>
<accession>Q9USS4</accession>
<sequence>MDKKIADLLQELQSSSNVTSNQLENVDKSSIPLSKARKPSDFELNNSIEDAEKIKTYPAALRYIFALNSRHPEKLQKLRKMKAMQERQERNWSLERQRLVQHFESKTKLQEILKPLSSDPKLKQPSNCLNDQTNNDSAQTLDDNRALQEFDEQVVQLTNRMYKEQLAILADLKIPLFLSVNNDEELSEDQKRLLQLLQDLLGA</sequence>
<organism>
    <name type="scientific">Schizosaccharomyces pombe (strain 972 / ATCC 24843)</name>
    <name type="common">Fission yeast</name>
    <dbReference type="NCBI Taxonomy" id="284812"/>
    <lineage>
        <taxon>Eukaryota</taxon>
        <taxon>Fungi</taxon>
        <taxon>Dikarya</taxon>
        <taxon>Ascomycota</taxon>
        <taxon>Taphrinomycotina</taxon>
        <taxon>Schizosaccharomycetes</taxon>
        <taxon>Schizosaccharomycetales</taxon>
        <taxon>Schizosaccharomycetaceae</taxon>
        <taxon>Schizosaccharomyces</taxon>
    </lineage>
</organism>
<gene>
    <name type="ORF">SPBC557.02c</name>
</gene>
<feature type="chain" id="PRO_0000304065" description="Uncharacterized protein C557.02c">
    <location>
        <begin position="1"/>
        <end position="203"/>
    </location>
</feature>
<feature type="region of interest" description="Disordered" evidence="1">
    <location>
        <begin position="117"/>
        <end position="138"/>
    </location>
</feature>
<feature type="compositionally biased region" description="Polar residues" evidence="1">
    <location>
        <begin position="124"/>
        <end position="138"/>
    </location>
</feature>
<evidence type="ECO:0000256" key="1">
    <source>
        <dbReference type="SAM" id="MobiDB-lite"/>
    </source>
</evidence>
<evidence type="ECO:0000269" key="2">
    <source>
    </source>
</evidence>
<comment type="subcellular location">
    <subcellularLocation>
        <location evidence="2">Cytoplasm</location>
    </subcellularLocation>
    <subcellularLocation>
        <location evidence="2">Nucleus</location>
    </subcellularLocation>
</comment>
<dbReference type="EMBL" id="CU329671">
    <property type="protein sequence ID" value="CAB60669.1"/>
    <property type="molecule type" value="Genomic_DNA"/>
</dbReference>
<dbReference type="PIR" id="T50367">
    <property type="entry name" value="T50367"/>
</dbReference>
<dbReference type="RefSeq" id="NP_596025.1">
    <property type="nucleotide sequence ID" value="NM_001021934.2"/>
</dbReference>
<dbReference type="SMR" id="Q9USS4"/>
<dbReference type="BioGRID" id="277428">
    <property type="interactions" value="6"/>
</dbReference>
<dbReference type="iPTMnet" id="Q9USS4"/>
<dbReference type="PaxDb" id="4896-SPBC557.02c.1"/>
<dbReference type="EnsemblFungi" id="SPBC557.02c.1">
    <property type="protein sequence ID" value="SPBC557.02c.1:pep"/>
    <property type="gene ID" value="SPBC557.02c"/>
</dbReference>
<dbReference type="KEGG" id="spo:2540912"/>
<dbReference type="PomBase" id="SPBC557.02c"/>
<dbReference type="VEuPathDB" id="FungiDB:SPBC557.02c"/>
<dbReference type="eggNOG" id="ENOG502SASY">
    <property type="taxonomic scope" value="Eukaryota"/>
</dbReference>
<dbReference type="HOGENOM" id="CLU_1349596_0_0_1"/>
<dbReference type="InParanoid" id="Q9USS4"/>
<dbReference type="OMA" id="DWFMERQ"/>
<dbReference type="PRO" id="PR:Q9USS4"/>
<dbReference type="Proteomes" id="UP000002485">
    <property type="component" value="Chromosome II"/>
</dbReference>
<dbReference type="GO" id="GO:0005829">
    <property type="term" value="C:cytosol"/>
    <property type="evidence" value="ECO:0007005"/>
    <property type="project" value="PomBase"/>
</dbReference>
<dbReference type="GO" id="GO:0005634">
    <property type="term" value="C:nucleus"/>
    <property type="evidence" value="ECO:0007005"/>
    <property type="project" value="PomBase"/>
</dbReference>
<dbReference type="InterPro" id="IPR018858">
    <property type="entry name" value="DUF2458"/>
</dbReference>
<dbReference type="Pfam" id="PF10454">
    <property type="entry name" value="DUF2458"/>
    <property type="match status" value="1"/>
</dbReference>
<name>YOA2_SCHPO</name>
<reference key="1">
    <citation type="journal article" date="2002" name="Nature">
        <title>The genome sequence of Schizosaccharomyces pombe.</title>
        <authorList>
            <person name="Wood V."/>
            <person name="Gwilliam R."/>
            <person name="Rajandream M.A."/>
            <person name="Lyne M.H."/>
            <person name="Lyne R."/>
            <person name="Stewart A."/>
            <person name="Sgouros J.G."/>
            <person name="Peat N."/>
            <person name="Hayles J."/>
            <person name="Baker S.G."/>
            <person name="Basham D."/>
            <person name="Bowman S."/>
            <person name="Brooks K."/>
            <person name="Brown D."/>
            <person name="Brown S."/>
            <person name="Chillingworth T."/>
            <person name="Churcher C.M."/>
            <person name="Collins M."/>
            <person name="Connor R."/>
            <person name="Cronin A."/>
            <person name="Davis P."/>
            <person name="Feltwell T."/>
            <person name="Fraser A."/>
            <person name="Gentles S."/>
            <person name="Goble A."/>
            <person name="Hamlin N."/>
            <person name="Harris D.E."/>
            <person name="Hidalgo J."/>
            <person name="Hodgson G."/>
            <person name="Holroyd S."/>
            <person name="Hornsby T."/>
            <person name="Howarth S."/>
            <person name="Huckle E.J."/>
            <person name="Hunt S."/>
            <person name="Jagels K."/>
            <person name="James K.D."/>
            <person name="Jones L."/>
            <person name="Jones M."/>
            <person name="Leather S."/>
            <person name="McDonald S."/>
            <person name="McLean J."/>
            <person name="Mooney P."/>
            <person name="Moule S."/>
            <person name="Mungall K.L."/>
            <person name="Murphy L.D."/>
            <person name="Niblett D."/>
            <person name="Odell C."/>
            <person name="Oliver K."/>
            <person name="O'Neil S."/>
            <person name="Pearson D."/>
            <person name="Quail M.A."/>
            <person name="Rabbinowitsch E."/>
            <person name="Rutherford K.M."/>
            <person name="Rutter S."/>
            <person name="Saunders D."/>
            <person name="Seeger K."/>
            <person name="Sharp S."/>
            <person name="Skelton J."/>
            <person name="Simmonds M.N."/>
            <person name="Squares R."/>
            <person name="Squares S."/>
            <person name="Stevens K."/>
            <person name="Taylor K."/>
            <person name="Taylor R.G."/>
            <person name="Tivey A."/>
            <person name="Walsh S.V."/>
            <person name="Warren T."/>
            <person name="Whitehead S."/>
            <person name="Woodward J.R."/>
            <person name="Volckaert G."/>
            <person name="Aert R."/>
            <person name="Robben J."/>
            <person name="Grymonprez B."/>
            <person name="Weltjens I."/>
            <person name="Vanstreels E."/>
            <person name="Rieger M."/>
            <person name="Schaefer M."/>
            <person name="Mueller-Auer S."/>
            <person name="Gabel C."/>
            <person name="Fuchs M."/>
            <person name="Duesterhoeft A."/>
            <person name="Fritzc C."/>
            <person name="Holzer E."/>
            <person name="Moestl D."/>
            <person name="Hilbert H."/>
            <person name="Borzym K."/>
            <person name="Langer I."/>
            <person name="Beck A."/>
            <person name="Lehrach H."/>
            <person name="Reinhardt R."/>
            <person name="Pohl T.M."/>
            <person name="Eger P."/>
            <person name="Zimmermann W."/>
            <person name="Wedler H."/>
            <person name="Wambutt R."/>
            <person name="Purnelle B."/>
            <person name="Goffeau A."/>
            <person name="Cadieu E."/>
            <person name="Dreano S."/>
            <person name="Gloux S."/>
            <person name="Lelaure V."/>
            <person name="Mottier S."/>
            <person name="Galibert F."/>
            <person name="Aves S.J."/>
            <person name="Xiang Z."/>
            <person name="Hunt C."/>
            <person name="Moore K."/>
            <person name="Hurst S.M."/>
            <person name="Lucas M."/>
            <person name="Rochet M."/>
            <person name="Gaillardin C."/>
            <person name="Tallada V.A."/>
            <person name="Garzon A."/>
            <person name="Thode G."/>
            <person name="Daga R.R."/>
            <person name="Cruzado L."/>
            <person name="Jimenez J."/>
            <person name="Sanchez M."/>
            <person name="del Rey F."/>
            <person name="Benito J."/>
            <person name="Dominguez A."/>
            <person name="Revuelta J.L."/>
            <person name="Moreno S."/>
            <person name="Armstrong J."/>
            <person name="Forsburg S.L."/>
            <person name="Cerutti L."/>
            <person name="Lowe T."/>
            <person name="McCombie W.R."/>
            <person name="Paulsen I."/>
            <person name="Potashkin J."/>
            <person name="Shpakovski G.V."/>
            <person name="Ussery D."/>
            <person name="Barrell B.G."/>
            <person name="Nurse P."/>
        </authorList>
    </citation>
    <scope>NUCLEOTIDE SEQUENCE [LARGE SCALE GENOMIC DNA]</scope>
    <source>
        <strain>972 / ATCC 24843</strain>
    </source>
</reference>
<reference key="2">
    <citation type="journal article" date="2006" name="Nat. Biotechnol.">
        <title>ORFeome cloning and global analysis of protein localization in the fission yeast Schizosaccharomyces pombe.</title>
        <authorList>
            <person name="Matsuyama A."/>
            <person name="Arai R."/>
            <person name="Yashiroda Y."/>
            <person name="Shirai A."/>
            <person name="Kamata A."/>
            <person name="Sekido S."/>
            <person name="Kobayashi Y."/>
            <person name="Hashimoto A."/>
            <person name="Hamamoto M."/>
            <person name="Hiraoka Y."/>
            <person name="Horinouchi S."/>
            <person name="Yoshida M."/>
        </authorList>
    </citation>
    <scope>SUBCELLULAR LOCATION [LARGE SCALE ANALYSIS]</scope>
</reference>
<protein>
    <recommendedName>
        <fullName>Uncharacterized protein C557.02c</fullName>
    </recommendedName>
</protein>
<keyword id="KW-0963">Cytoplasm</keyword>
<keyword id="KW-0539">Nucleus</keyword>
<keyword id="KW-1185">Reference proteome</keyword>